<name>LRGA_STAAN</name>
<organism>
    <name type="scientific">Staphylococcus aureus (strain N315)</name>
    <dbReference type="NCBI Taxonomy" id="158879"/>
    <lineage>
        <taxon>Bacteria</taxon>
        <taxon>Bacillati</taxon>
        <taxon>Bacillota</taxon>
        <taxon>Bacilli</taxon>
        <taxon>Bacillales</taxon>
        <taxon>Staphylococcaceae</taxon>
        <taxon>Staphylococcus</taxon>
    </lineage>
</organism>
<dbReference type="EMBL" id="BA000018">
    <property type="protein sequence ID" value="BAB41476.1"/>
    <property type="molecule type" value="Genomic_DNA"/>
</dbReference>
<dbReference type="PIR" id="A89790">
    <property type="entry name" value="A89790"/>
</dbReference>
<dbReference type="SMR" id="P60650"/>
<dbReference type="EnsemblBacteria" id="BAB41476">
    <property type="protein sequence ID" value="BAB41476"/>
    <property type="gene ID" value="BAB41476"/>
</dbReference>
<dbReference type="KEGG" id="sau:SA0252"/>
<dbReference type="HOGENOM" id="CLU_113736_0_1_9"/>
<dbReference type="GO" id="GO:0005886">
    <property type="term" value="C:plasma membrane"/>
    <property type="evidence" value="ECO:0007669"/>
    <property type="project" value="UniProtKB-SubCell"/>
</dbReference>
<dbReference type="GO" id="GO:0019835">
    <property type="term" value="P:cytolysis"/>
    <property type="evidence" value="ECO:0007669"/>
    <property type="project" value="UniProtKB-UniRule"/>
</dbReference>
<dbReference type="GO" id="GO:0031640">
    <property type="term" value="P:killing of cells of another organism"/>
    <property type="evidence" value="ECO:0007669"/>
    <property type="project" value="UniProtKB-KW"/>
</dbReference>
<dbReference type="GO" id="GO:0012501">
    <property type="term" value="P:programmed cell death"/>
    <property type="evidence" value="ECO:0007669"/>
    <property type="project" value="UniProtKB-UniRule"/>
</dbReference>
<dbReference type="HAMAP" id="MF_01141">
    <property type="entry name" value="LrgA"/>
    <property type="match status" value="1"/>
</dbReference>
<dbReference type="InterPro" id="IPR023736">
    <property type="entry name" value="Antiholin-like_LrgA"/>
</dbReference>
<dbReference type="InterPro" id="IPR005538">
    <property type="entry name" value="LrgA/CidA"/>
</dbReference>
<dbReference type="NCBIfam" id="NF003155">
    <property type="entry name" value="PRK04125.1"/>
    <property type="match status" value="1"/>
</dbReference>
<dbReference type="PANTHER" id="PTHR33931:SF4">
    <property type="entry name" value="ANTIHOLIN-LIKE PROTEIN LRGA"/>
    <property type="match status" value="1"/>
</dbReference>
<dbReference type="PANTHER" id="PTHR33931">
    <property type="entry name" value="HOLIN-LIKE PROTEIN CIDA-RELATED"/>
    <property type="match status" value="1"/>
</dbReference>
<dbReference type="Pfam" id="PF03788">
    <property type="entry name" value="LrgA"/>
    <property type="match status" value="1"/>
</dbReference>
<protein>
    <recommendedName>
        <fullName evidence="1">Antiholin-like protein LrgA</fullName>
    </recommendedName>
</protein>
<proteinExistence type="inferred from homology"/>
<reference key="1">
    <citation type="journal article" date="2001" name="Lancet">
        <title>Whole genome sequencing of meticillin-resistant Staphylococcus aureus.</title>
        <authorList>
            <person name="Kuroda M."/>
            <person name="Ohta T."/>
            <person name="Uchiyama I."/>
            <person name="Baba T."/>
            <person name="Yuzawa H."/>
            <person name="Kobayashi I."/>
            <person name="Cui L."/>
            <person name="Oguchi A."/>
            <person name="Aoki K."/>
            <person name="Nagai Y."/>
            <person name="Lian J.-Q."/>
            <person name="Ito T."/>
            <person name="Kanamori M."/>
            <person name="Matsumaru H."/>
            <person name="Maruyama A."/>
            <person name="Murakami H."/>
            <person name="Hosoyama A."/>
            <person name="Mizutani-Ui Y."/>
            <person name="Takahashi N.K."/>
            <person name="Sawano T."/>
            <person name="Inoue R."/>
            <person name="Kaito C."/>
            <person name="Sekimizu K."/>
            <person name="Hirakawa H."/>
            <person name="Kuhara S."/>
            <person name="Goto S."/>
            <person name="Yabuzaki J."/>
            <person name="Kanehisa M."/>
            <person name="Yamashita A."/>
            <person name="Oshima K."/>
            <person name="Furuya K."/>
            <person name="Yoshino C."/>
            <person name="Shiba T."/>
            <person name="Hattori M."/>
            <person name="Ogasawara N."/>
            <person name="Hayashi H."/>
            <person name="Hiramatsu K."/>
        </authorList>
    </citation>
    <scope>NUCLEOTIDE SEQUENCE [LARGE SCALE GENOMIC DNA]</scope>
    <source>
        <strain>N315</strain>
    </source>
</reference>
<evidence type="ECO:0000255" key="1">
    <source>
        <dbReference type="HAMAP-Rule" id="MF_01141"/>
    </source>
</evidence>
<keyword id="KW-1003">Cell membrane</keyword>
<keyword id="KW-0204">Cytolysis</keyword>
<keyword id="KW-0472">Membrane</keyword>
<keyword id="KW-0812">Transmembrane</keyword>
<keyword id="KW-1133">Transmembrane helix</keyword>
<feature type="chain" id="PRO_0000213192" description="Antiholin-like protein LrgA">
    <location>
        <begin position="1"/>
        <end position="145"/>
    </location>
</feature>
<feature type="transmembrane region" description="Helical" evidence="1">
    <location>
        <begin position="13"/>
        <end position="30"/>
    </location>
</feature>
<feature type="transmembrane region" description="Helical" evidence="1">
    <location>
        <begin position="40"/>
        <end position="62"/>
    </location>
</feature>
<feature type="transmembrane region" description="Helical" evidence="1">
    <location>
        <begin position="69"/>
        <end position="91"/>
    </location>
</feature>
<feature type="transmembrane region" description="Helical" evidence="1">
    <location>
        <begin position="95"/>
        <end position="117"/>
    </location>
</feature>
<gene>
    <name evidence="1" type="primary">lrgA</name>
    <name type="ordered locus">SA0252</name>
</gene>
<comment type="function">
    <text evidence="1">Inhibits the expression or activity of extracellular murein hydrolases by interacting, possibly with LrgB, with the holin-like proteins CidA and/or CidB. The LrgAB and CidAB proteins may affect the proton motive force of the membrane. May be involved in programmed cell death (PCD), possibly triggering PCD in response to antibiotics and environmental stresses.</text>
</comment>
<comment type="subcellular location">
    <subcellularLocation>
        <location evidence="1">Cell membrane</location>
        <topology evidence="1">Multi-pass membrane protein</topology>
    </subcellularLocation>
</comment>
<comment type="similarity">
    <text evidence="1">Belongs to the CidA/LrgA family. LrgA subfamily.</text>
</comment>
<accession>P60650</accession>
<accession>Q99WW2</accession>
<sequence>MKQQKDASKPAHFFHQVIVIALVLFVSKIIESFMPIPMPASVIGLVLLFVLLCTGAVKLGEVEKVGTTLTNNIGLLFVPAGISVVNSLGVISQAPFLIIGLIIVSTILLLICTGYVTQIIMKVTSRSKGDKVTKKIKIEEAQAHD</sequence>